<comment type="function">
    <text evidence="1">RNA chaperone that binds small regulatory RNA (sRNAs) and mRNAs to facilitate mRNA translational regulation in response to envelope stress, environmental stress and changes in metabolite concentrations. Also binds with high specificity to tRNAs.</text>
</comment>
<comment type="subunit">
    <text evidence="1">Homohexamer.</text>
</comment>
<comment type="similarity">
    <text evidence="1">Belongs to the Hfq family.</text>
</comment>
<dbReference type="EMBL" id="CP000512">
    <property type="protein sequence ID" value="ABM32020.1"/>
    <property type="molecule type" value="Genomic_DNA"/>
</dbReference>
<dbReference type="RefSeq" id="WP_011794570.1">
    <property type="nucleotide sequence ID" value="NC_008752.1"/>
</dbReference>
<dbReference type="SMR" id="A1TM32"/>
<dbReference type="STRING" id="397945.Aave_1429"/>
<dbReference type="GeneID" id="79791093"/>
<dbReference type="KEGG" id="aav:Aave_1429"/>
<dbReference type="eggNOG" id="COG1923">
    <property type="taxonomic scope" value="Bacteria"/>
</dbReference>
<dbReference type="HOGENOM" id="CLU_113688_2_2_4"/>
<dbReference type="OrthoDB" id="9799751at2"/>
<dbReference type="Proteomes" id="UP000002596">
    <property type="component" value="Chromosome"/>
</dbReference>
<dbReference type="GO" id="GO:0005829">
    <property type="term" value="C:cytosol"/>
    <property type="evidence" value="ECO:0007669"/>
    <property type="project" value="TreeGrafter"/>
</dbReference>
<dbReference type="GO" id="GO:0003723">
    <property type="term" value="F:RNA binding"/>
    <property type="evidence" value="ECO:0007669"/>
    <property type="project" value="UniProtKB-UniRule"/>
</dbReference>
<dbReference type="GO" id="GO:0006355">
    <property type="term" value="P:regulation of DNA-templated transcription"/>
    <property type="evidence" value="ECO:0007669"/>
    <property type="project" value="InterPro"/>
</dbReference>
<dbReference type="GO" id="GO:0043487">
    <property type="term" value="P:regulation of RNA stability"/>
    <property type="evidence" value="ECO:0007669"/>
    <property type="project" value="TreeGrafter"/>
</dbReference>
<dbReference type="GO" id="GO:0045974">
    <property type="term" value="P:regulation of translation, ncRNA-mediated"/>
    <property type="evidence" value="ECO:0007669"/>
    <property type="project" value="TreeGrafter"/>
</dbReference>
<dbReference type="CDD" id="cd01716">
    <property type="entry name" value="Hfq"/>
    <property type="match status" value="1"/>
</dbReference>
<dbReference type="FunFam" id="2.30.30.100:FF:000001">
    <property type="entry name" value="RNA-binding protein Hfq"/>
    <property type="match status" value="1"/>
</dbReference>
<dbReference type="Gene3D" id="2.30.30.100">
    <property type="match status" value="1"/>
</dbReference>
<dbReference type="HAMAP" id="MF_00436">
    <property type="entry name" value="Hfq"/>
    <property type="match status" value="1"/>
</dbReference>
<dbReference type="InterPro" id="IPR005001">
    <property type="entry name" value="Hfq"/>
</dbReference>
<dbReference type="InterPro" id="IPR010920">
    <property type="entry name" value="LSM_dom_sf"/>
</dbReference>
<dbReference type="InterPro" id="IPR047575">
    <property type="entry name" value="Sm"/>
</dbReference>
<dbReference type="NCBIfam" id="TIGR02383">
    <property type="entry name" value="Hfq"/>
    <property type="match status" value="1"/>
</dbReference>
<dbReference type="NCBIfam" id="NF001602">
    <property type="entry name" value="PRK00395.1"/>
    <property type="match status" value="1"/>
</dbReference>
<dbReference type="PANTHER" id="PTHR34772">
    <property type="entry name" value="RNA-BINDING PROTEIN HFQ"/>
    <property type="match status" value="1"/>
</dbReference>
<dbReference type="PANTHER" id="PTHR34772:SF1">
    <property type="entry name" value="RNA-BINDING PROTEIN HFQ"/>
    <property type="match status" value="1"/>
</dbReference>
<dbReference type="Pfam" id="PF17209">
    <property type="entry name" value="Hfq"/>
    <property type="match status" value="1"/>
</dbReference>
<dbReference type="SUPFAM" id="SSF50182">
    <property type="entry name" value="Sm-like ribonucleoproteins"/>
    <property type="match status" value="1"/>
</dbReference>
<dbReference type="PROSITE" id="PS52002">
    <property type="entry name" value="SM"/>
    <property type="match status" value="1"/>
</dbReference>
<sequence>MSNKGQLLQDPFLNALRREHVPVSIYLVNGIKLQGQIESFDQYVVLLRNTVTQMVYKHAISTIVPGRAVNFSTAEPADAESGN</sequence>
<organism>
    <name type="scientific">Paracidovorax citrulli (strain AAC00-1)</name>
    <name type="common">Acidovorax citrulli</name>
    <dbReference type="NCBI Taxonomy" id="397945"/>
    <lineage>
        <taxon>Bacteria</taxon>
        <taxon>Pseudomonadati</taxon>
        <taxon>Pseudomonadota</taxon>
        <taxon>Betaproteobacteria</taxon>
        <taxon>Burkholderiales</taxon>
        <taxon>Comamonadaceae</taxon>
        <taxon>Paracidovorax</taxon>
    </lineage>
</organism>
<proteinExistence type="inferred from homology"/>
<evidence type="ECO:0000255" key="1">
    <source>
        <dbReference type="HAMAP-Rule" id="MF_00436"/>
    </source>
</evidence>
<evidence type="ECO:0000255" key="2">
    <source>
        <dbReference type="PROSITE-ProRule" id="PRU01346"/>
    </source>
</evidence>
<protein>
    <recommendedName>
        <fullName evidence="1">RNA-binding protein Hfq</fullName>
    </recommendedName>
</protein>
<accession>A1TM32</accession>
<name>HFQ_PARC0</name>
<feature type="chain" id="PRO_1000025883" description="RNA-binding protein Hfq">
    <location>
        <begin position="1"/>
        <end position="83"/>
    </location>
</feature>
<feature type="domain" description="Sm" evidence="2">
    <location>
        <begin position="10"/>
        <end position="69"/>
    </location>
</feature>
<keyword id="KW-0694">RNA-binding</keyword>
<keyword id="KW-0346">Stress response</keyword>
<gene>
    <name evidence="1" type="primary">hfq</name>
    <name type="ordered locus">Aave_1429</name>
</gene>
<reference key="1">
    <citation type="submission" date="2006-12" db="EMBL/GenBank/DDBJ databases">
        <title>Complete sequence of Acidovorax avenae subsp. citrulli AAC00-1.</title>
        <authorList>
            <person name="Copeland A."/>
            <person name="Lucas S."/>
            <person name="Lapidus A."/>
            <person name="Barry K."/>
            <person name="Detter J.C."/>
            <person name="Glavina del Rio T."/>
            <person name="Dalin E."/>
            <person name="Tice H."/>
            <person name="Pitluck S."/>
            <person name="Kiss H."/>
            <person name="Brettin T."/>
            <person name="Bruce D."/>
            <person name="Han C."/>
            <person name="Tapia R."/>
            <person name="Gilna P."/>
            <person name="Schmutz J."/>
            <person name="Larimer F."/>
            <person name="Land M."/>
            <person name="Hauser L."/>
            <person name="Kyrpides N."/>
            <person name="Kim E."/>
            <person name="Stahl D."/>
            <person name="Richardson P."/>
        </authorList>
    </citation>
    <scope>NUCLEOTIDE SEQUENCE [LARGE SCALE GENOMIC DNA]</scope>
    <source>
        <strain>AAC00-1</strain>
    </source>
</reference>